<reference key="1">
    <citation type="journal article" date="2006" name="Mol. Microbiol.">
        <title>Role of pathogenicity island-associated integrases in the genome plasticity of uropathogenic Escherichia coli strain 536.</title>
        <authorList>
            <person name="Hochhut B."/>
            <person name="Wilde C."/>
            <person name="Balling G."/>
            <person name="Middendorf B."/>
            <person name="Dobrindt U."/>
            <person name="Brzuszkiewicz E."/>
            <person name="Gottschalk G."/>
            <person name="Carniel E."/>
            <person name="Hacker J."/>
        </authorList>
    </citation>
    <scope>NUCLEOTIDE SEQUENCE [LARGE SCALE GENOMIC DNA]</scope>
    <source>
        <strain>536 / UPEC</strain>
    </source>
</reference>
<proteinExistence type="inferred from homology"/>
<feature type="chain" id="PRO_1000067447" description="C4-dicarboxylate transport protein">
    <location>
        <begin position="1"/>
        <end position="428"/>
    </location>
</feature>
<feature type="transmembrane region" description="Helical" evidence="1">
    <location>
        <begin position="8"/>
        <end position="28"/>
    </location>
</feature>
<feature type="transmembrane region" description="Helical" evidence="1">
    <location>
        <begin position="44"/>
        <end position="64"/>
    </location>
</feature>
<feature type="transmembrane region" description="Helical" evidence="1">
    <location>
        <begin position="76"/>
        <end position="96"/>
    </location>
</feature>
<feature type="transmembrane region" description="Helical" evidence="1">
    <location>
        <begin position="142"/>
        <end position="162"/>
    </location>
</feature>
<feature type="transmembrane region" description="Helical" evidence="1">
    <location>
        <begin position="184"/>
        <end position="204"/>
    </location>
</feature>
<feature type="transmembrane region" description="Helical" evidence="1">
    <location>
        <begin position="222"/>
        <end position="242"/>
    </location>
</feature>
<feature type="transmembrane region" description="Helical" evidence="1">
    <location>
        <begin position="326"/>
        <end position="346"/>
    </location>
</feature>
<feature type="transmembrane region" description="Helical" evidence="1">
    <location>
        <begin position="352"/>
        <end position="372"/>
    </location>
</feature>
<name>DCTA_ECOL5</name>
<organism>
    <name type="scientific">Escherichia coli O6:K15:H31 (strain 536 / UPEC)</name>
    <dbReference type="NCBI Taxonomy" id="362663"/>
    <lineage>
        <taxon>Bacteria</taxon>
        <taxon>Pseudomonadati</taxon>
        <taxon>Pseudomonadota</taxon>
        <taxon>Gammaproteobacteria</taxon>
        <taxon>Enterobacterales</taxon>
        <taxon>Enterobacteriaceae</taxon>
        <taxon>Escherichia</taxon>
    </lineage>
</organism>
<protein>
    <recommendedName>
        <fullName evidence="1">C4-dicarboxylate transport protein</fullName>
    </recommendedName>
</protein>
<dbReference type="EMBL" id="CP000247">
    <property type="protein sequence ID" value="ABG71604.1"/>
    <property type="molecule type" value="Genomic_DNA"/>
</dbReference>
<dbReference type="RefSeq" id="WP_000858214.1">
    <property type="nucleotide sequence ID" value="NC_008253.1"/>
</dbReference>
<dbReference type="SMR" id="Q0TBS5"/>
<dbReference type="GeneID" id="93778248"/>
<dbReference type="KEGG" id="ecp:ECP_3628"/>
<dbReference type="HOGENOM" id="CLU_019375_7_0_6"/>
<dbReference type="Proteomes" id="UP000009182">
    <property type="component" value="Chromosome"/>
</dbReference>
<dbReference type="GO" id="GO:0005886">
    <property type="term" value="C:plasma membrane"/>
    <property type="evidence" value="ECO:0007669"/>
    <property type="project" value="UniProtKB-SubCell"/>
</dbReference>
<dbReference type="GO" id="GO:0015138">
    <property type="term" value="F:fumarate transmembrane transporter activity"/>
    <property type="evidence" value="ECO:0007669"/>
    <property type="project" value="TreeGrafter"/>
</dbReference>
<dbReference type="GO" id="GO:0015366">
    <property type="term" value="F:malate:proton symporter activity"/>
    <property type="evidence" value="ECO:0007669"/>
    <property type="project" value="TreeGrafter"/>
</dbReference>
<dbReference type="GO" id="GO:0015141">
    <property type="term" value="F:succinate transmembrane transporter activity"/>
    <property type="evidence" value="ECO:0007669"/>
    <property type="project" value="TreeGrafter"/>
</dbReference>
<dbReference type="GO" id="GO:0070778">
    <property type="term" value="P:L-aspartate transmembrane transport"/>
    <property type="evidence" value="ECO:0007669"/>
    <property type="project" value="TreeGrafter"/>
</dbReference>
<dbReference type="FunFam" id="1.10.3860.10:FF:000001">
    <property type="entry name" value="C4-dicarboxylate transport protein"/>
    <property type="match status" value="1"/>
</dbReference>
<dbReference type="Gene3D" id="1.10.3860.10">
    <property type="entry name" value="Sodium:dicarboxylate symporter"/>
    <property type="match status" value="1"/>
</dbReference>
<dbReference type="HAMAP" id="MF_01300">
    <property type="entry name" value="C4_dicarb_transport"/>
    <property type="match status" value="1"/>
</dbReference>
<dbReference type="InterPro" id="IPR023954">
    <property type="entry name" value="C4_dicarb_transport"/>
</dbReference>
<dbReference type="InterPro" id="IPR001991">
    <property type="entry name" value="Na-dicarboxylate_symporter"/>
</dbReference>
<dbReference type="InterPro" id="IPR018107">
    <property type="entry name" value="Na-dicarboxylate_symporter_CS"/>
</dbReference>
<dbReference type="InterPro" id="IPR036458">
    <property type="entry name" value="Na:dicarbo_symporter_sf"/>
</dbReference>
<dbReference type="NCBIfam" id="NF002461">
    <property type="entry name" value="PRK01663.1"/>
    <property type="match status" value="1"/>
</dbReference>
<dbReference type="NCBIfam" id="NF009587">
    <property type="entry name" value="PRK13027.1"/>
    <property type="match status" value="1"/>
</dbReference>
<dbReference type="PANTHER" id="PTHR42865:SF1">
    <property type="entry name" value="AEROBIC C4-DICARBOXYLATE TRANSPORT PROTEIN"/>
    <property type="match status" value="1"/>
</dbReference>
<dbReference type="PANTHER" id="PTHR42865">
    <property type="entry name" value="PROTON/GLUTAMATE-ASPARTATE SYMPORTER"/>
    <property type="match status" value="1"/>
</dbReference>
<dbReference type="Pfam" id="PF00375">
    <property type="entry name" value="SDF"/>
    <property type="match status" value="1"/>
</dbReference>
<dbReference type="PRINTS" id="PR00173">
    <property type="entry name" value="EDTRNSPORT"/>
</dbReference>
<dbReference type="SUPFAM" id="SSF118215">
    <property type="entry name" value="Proton glutamate symport protein"/>
    <property type="match status" value="1"/>
</dbReference>
<dbReference type="PROSITE" id="PS00713">
    <property type="entry name" value="NA_DICARBOXYL_SYMP_1"/>
    <property type="match status" value="1"/>
</dbReference>
<dbReference type="PROSITE" id="PS00714">
    <property type="entry name" value="NA_DICARBOXYL_SYMP_2"/>
    <property type="match status" value="1"/>
</dbReference>
<keyword id="KW-0997">Cell inner membrane</keyword>
<keyword id="KW-1003">Cell membrane</keyword>
<keyword id="KW-0472">Membrane</keyword>
<keyword id="KW-0769">Symport</keyword>
<keyword id="KW-0812">Transmembrane</keyword>
<keyword id="KW-1133">Transmembrane helix</keyword>
<keyword id="KW-0813">Transport</keyword>
<accession>Q0TBS5</accession>
<sequence length="428" mass="45436">MKTSLFKSLYFQVLTAIAIGILLGHFYPEIGEQMKPLGDGFVKLIKMIIAPVIFCTVVTGIAGMESMKAVGRTGAVALLYFEIVSTIALIIGLIIVNVVQPGAGMNVDPATLDAKAVAVYADQAKDQGIVAFIMDVIPASVIGAFASGNILQVLLFAVLFGFALHRLGSKGQLIFNVIESFSQVIFGIINMIMRLAPIGAFGAMAFTIGKYGVGTLVQLGQLIICFYITCILFVVLVLGSIAKATGFSIFKFIRYIREELLIVLGTSSSESALPRMLDKMEKLGCRKSVVGLVIPTGYSFNLDGTSIYLTMAAVFIAQATNSQMDIVHQITLLIVLLLSSKGAAGVTGSGFIVLAATLSAVGHLPVAGLALILGIDRFMSEARALTNLVGNGVATIVVAKWVKELDHKKLDDVLNNRAPDGKTHELSS</sequence>
<comment type="function">
    <text evidence="1">Responsible for the transport of dicarboxylates such as succinate, fumarate, and malate from the periplasm across the membrane.</text>
</comment>
<comment type="subcellular location">
    <subcellularLocation>
        <location evidence="1">Cell inner membrane</location>
        <topology evidence="1">Multi-pass membrane protein</topology>
    </subcellularLocation>
</comment>
<comment type="similarity">
    <text evidence="1">Belongs to the dicarboxylate/amino acid:cation symporter (DAACS) (TC 2.A.23) family.</text>
</comment>
<evidence type="ECO:0000255" key="1">
    <source>
        <dbReference type="HAMAP-Rule" id="MF_01300"/>
    </source>
</evidence>
<gene>
    <name evidence="1" type="primary">dctA</name>
    <name type="ordered locus">ECP_3628</name>
</gene>